<sequence>VDPGESTFIDEGATGR</sequence>
<name>FIBA_RABIT</name>
<protein>
    <recommendedName>
        <fullName>Fibrinogen alpha chain</fullName>
    </recommendedName>
    <component>
        <recommendedName>
            <fullName>Fibrinopeptide A</fullName>
        </recommendedName>
    </component>
</protein>
<proteinExistence type="evidence at protein level"/>
<comment type="function">
    <text evidence="1">Cleaved by the protease thrombin to yield monomers which, together with fibrinogen beta (FGB) and fibrinogen gamma (FGG), polymerize to form an insoluble fibrin matrix. Fibrin has a major function in hemostasis as one of the primary components of blood clots. In addition, functions during the early stages of wound repair to stabilize the lesion and guide cell migration during re-epithelialization. Was originally thought to be essential for platelet aggregation, based on in vitro studies using anticoagulated blood. However, subsequent studies have shown that it is not absolutely required for thrombus formation in vivo. Enhances expression of SELP in activated platelets via an ITGB3-dependent pathway. Maternal fibrinogen is essential for successful pregnancy. Fibrin deposition is also associated with infection, where it protects against IFNG-mediated hemorrhage. May also facilitate the immune response via both innate and T-cell mediated pathways.</text>
</comment>
<comment type="subunit">
    <text evidence="2">Heterohexamer; disulfide linked. Contains 2 sets of 3 non-identical chains (alpha, beta and gamma). The 2 heterotrimers are in head to head conformation with the N-termini in a small central domain (By similarity).</text>
</comment>
<comment type="subcellular location">
    <subcellularLocation>
        <location>Secreted</location>
    </subcellularLocation>
</comment>
<comment type="domain">
    <text evidence="2">A long coiled coil structure formed by 3 polypeptide chains connects the central nodule to the C-terminal domains (distal nodules). The long C-terminal ends of the alpha chains fold back, contributing a fourth strand to the coiled coil structure.</text>
</comment>
<comment type="PTM">
    <text>Conversion of fibrinogen to fibrin is triggered by thrombin, which cleaves fibrinopeptides A and B from alpha and beta chains, and thus exposes the N-terminal polymerization sites responsible for the formation of the soft clot. The soft clot is converted into the hard clot by factor XIIIA which catalyzes the epsilon-(gamma-glutamyl)lysine cross-linking between gamma chains (stronger) and between alpha chains (weaker) of different monomers.</text>
</comment>
<comment type="PTM">
    <text>Forms F13A-mediated cross-links between a glutamine and the epsilon-amino group of a lysine residue, forming fibronectin-fibrinogen heteropolymers.</text>
</comment>
<organism>
    <name type="scientific">Oryctolagus cuniculus</name>
    <name type="common">Rabbit</name>
    <dbReference type="NCBI Taxonomy" id="9986"/>
    <lineage>
        <taxon>Eukaryota</taxon>
        <taxon>Metazoa</taxon>
        <taxon>Chordata</taxon>
        <taxon>Craniata</taxon>
        <taxon>Vertebrata</taxon>
        <taxon>Euteleostomi</taxon>
        <taxon>Mammalia</taxon>
        <taxon>Eutheria</taxon>
        <taxon>Euarchontoglires</taxon>
        <taxon>Glires</taxon>
        <taxon>Lagomorpha</taxon>
        <taxon>Leporidae</taxon>
        <taxon>Oryctolagus</taxon>
    </lineage>
</organism>
<reference key="1">
    <citation type="journal article" date="1965" name="Acta Chem. Scand.">
        <title>Studies on fibrinopeptides from mammals.</title>
        <authorList>
            <person name="Blombaeck B."/>
            <person name="Blombaeck M."/>
            <person name="Grondahl N.J."/>
        </authorList>
    </citation>
    <scope>PROTEIN SEQUENCE</scope>
</reference>
<accession>P14461</accession>
<feature type="peptide" id="PRO_0000009037" description="Fibrinopeptide A">
    <location>
        <begin position="1"/>
        <end position="16"/>
    </location>
</feature>
<feature type="non-terminal residue">
    <location>
        <position position="16"/>
    </location>
</feature>
<gene>
    <name type="primary">FGA</name>
</gene>
<evidence type="ECO:0000250" key="1">
    <source>
        <dbReference type="UniProtKB" id="E9PV24"/>
    </source>
</evidence>
<evidence type="ECO:0000250" key="2">
    <source>
        <dbReference type="UniProtKB" id="P02671"/>
    </source>
</evidence>
<dbReference type="eggNOG" id="KOG2579">
    <property type="taxonomic scope" value="Eukaryota"/>
</dbReference>
<dbReference type="InParanoid" id="P14461"/>
<dbReference type="Proteomes" id="UP000001811">
    <property type="component" value="Unplaced"/>
</dbReference>
<dbReference type="GO" id="GO:0005576">
    <property type="term" value="C:extracellular region"/>
    <property type="evidence" value="ECO:0007669"/>
    <property type="project" value="UniProtKB-SubCell"/>
</dbReference>
<dbReference type="GO" id="GO:0002250">
    <property type="term" value="P:adaptive immune response"/>
    <property type="evidence" value="ECO:0007669"/>
    <property type="project" value="UniProtKB-KW"/>
</dbReference>
<dbReference type="GO" id="GO:0007596">
    <property type="term" value="P:blood coagulation"/>
    <property type="evidence" value="ECO:0007669"/>
    <property type="project" value="UniProtKB-KW"/>
</dbReference>
<dbReference type="GO" id="GO:0045087">
    <property type="term" value="P:innate immune response"/>
    <property type="evidence" value="ECO:0007669"/>
    <property type="project" value="UniProtKB-KW"/>
</dbReference>
<keyword id="KW-1064">Adaptive immunity</keyword>
<keyword id="KW-0094">Blood coagulation</keyword>
<keyword id="KW-0175">Coiled coil</keyword>
<keyword id="KW-0903">Direct protein sequencing</keyword>
<keyword id="KW-1015">Disulfide bond</keyword>
<keyword id="KW-0356">Hemostasis</keyword>
<keyword id="KW-0391">Immunity</keyword>
<keyword id="KW-0399">Innate immunity</keyword>
<keyword id="KW-1185">Reference proteome</keyword>
<keyword id="KW-0964">Secreted</keyword>